<gene>
    <name type="primary">fgf13</name>
</gene>
<keyword id="KW-0025">Alternative splicing</keyword>
<keyword id="KW-1003">Cell membrane</keyword>
<keyword id="KW-0966">Cell projection</keyword>
<keyword id="KW-0963">Cytoplasm</keyword>
<keyword id="KW-0472">Membrane</keyword>
<keyword id="KW-0493">Microtubule</keyword>
<keyword id="KW-0524">Neurogenesis</keyword>
<keyword id="KW-1185">Reference proteome</keyword>
<organism>
    <name type="scientific">Xenopus laevis</name>
    <name type="common">African clawed frog</name>
    <dbReference type="NCBI Taxonomy" id="8355"/>
    <lineage>
        <taxon>Eukaryota</taxon>
        <taxon>Metazoa</taxon>
        <taxon>Chordata</taxon>
        <taxon>Craniata</taxon>
        <taxon>Vertebrata</taxon>
        <taxon>Euteleostomi</taxon>
        <taxon>Amphibia</taxon>
        <taxon>Batrachia</taxon>
        <taxon>Anura</taxon>
        <taxon>Pipoidea</taxon>
        <taxon>Pipidae</taxon>
        <taxon>Xenopodinae</taxon>
        <taxon>Xenopus</taxon>
        <taxon>Xenopus</taxon>
    </lineage>
</organism>
<protein>
    <recommendedName>
        <fullName>Fibroblast growth factor 13</fullName>
        <shortName>FGF-13</shortName>
        <shortName>xFGF13</shortName>
    </recommendedName>
</protein>
<evidence type="ECO:0000250" key="1"/>
<evidence type="ECO:0000250" key="2">
    <source>
        <dbReference type="UniProtKB" id="P70377"/>
    </source>
</evidence>
<evidence type="ECO:0000256" key="3">
    <source>
        <dbReference type="SAM" id="MobiDB-lite"/>
    </source>
</evidence>
<evidence type="ECO:0000269" key="4">
    <source>
    </source>
</evidence>
<evidence type="ECO:0000303" key="5">
    <source>
    </source>
</evidence>
<evidence type="ECO:0000303" key="6">
    <source ref="2"/>
</evidence>
<evidence type="ECO:0000305" key="7"/>
<dbReference type="EMBL" id="AB308062">
    <property type="protein sequence ID" value="BAF66271.1"/>
    <property type="molecule type" value="mRNA"/>
</dbReference>
<dbReference type="EMBL" id="AB308063">
    <property type="protein sequence ID" value="BAF66272.1"/>
    <property type="molecule type" value="mRNA"/>
</dbReference>
<dbReference type="EMBL" id="BC076721">
    <property type="protein sequence ID" value="AAH76721.1"/>
    <property type="molecule type" value="mRNA"/>
</dbReference>
<dbReference type="RefSeq" id="NP_001086499.1">
    <molecule id="A6P7H6-3"/>
    <property type="nucleotide sequence ID" value="NM_001093030.1"/>
</dbReference>
<dbReference type="RefSeq" id="XP_018084451.1">
    <molecule id="A6P7H6-3"/>
    <property type="nucleotide sequence ID" value="XM_018228962.1"/>
</dbReference>
<dbReference type="RefSeq" id="XP_018084452.1">
    <molecule id="A6P7H6-3"/>
    <property type="nucleotide sequence ID" value="XM_018228963.1"/>
</dbReference>
<dbReference type="RefSeq" id="XP_018084453.1">
    <molecule id="A6P7H6-1"/>
    <property type="nucleotide sequence ID" value="XM_018228964.1"/>
</dbReference>
<dbReference type="RefSeq" id="XP_018084454.1">
    <molecule id="A6P7H6-2"/>
    <property type="nucleotide sequence ID" value="XM_018228965.1"/>
</dbReference>
<dbReference type="SMR" id="A6P7H6"/>
<dbReference type="DNASU" id="446334"/>
<dbReference type="GeneID" id="446334"/>
<dbReference type="KEGG" id="xla:446334"/>
<dbReference type="AGR" id="Xenbase:XB-GENE-484336"/>
<dbReference type="CTD" id="446334"/>
<dbReference type="Xenbase" id="XB-GENE-484336">
    <property type="gene designation" value="fgf13.L"/>
</dbReference>
<dbReference type="OMA" id="NTEPEXL"/>
<dbReference type="OrthoDB" id="6158176at2759"/>
<dbReference type="Proteomes" id="UP000186698">
    <property type="component" value="Chromosome 8L"/>
</dbReference>
<dbReference type="Bgee" id="446334">
    <property type="expression patterns" value="Expressed in muscle tissue and 16 other cell types or tissues"/>
</dbReference>
<dbReference type="GO" id="GO:0030424">
    <property type="term" value="C:axon"/>
    <property type="evidence" value="ECO:0000250"/>
    <property type="project" value="UniProtKB"/>
</dbReference>
<dbReference type="GO" id="GO:0005737">
    <property type="term" value="C:cytoplasm"/>
    <property type="evidence" value="ECO:0000250"/>
    <property type="project" value="UniProtKB"/>
</dbReference>
<dbReference type="GO" id="GO:0030425">
    <property type="term" value="C:dendrite"/>
    <property type="evidence" value="ECO:0000250"/>
    <property type="project" value="UniProtKB"/>
</dbReference>
<dbReference type="GO" id="GO:0030175">
    <property type="term" value="C:filopodium"/>
    <property type="evidence" value="ECO:0000250"/>
    <property type="project" value="UniProtKB"/>
</dbReference>
<dbReference type="GO" id="GO:0030426">
    <property type="term" value="C:growth cone"/>
    <property type="evidence" value="ECO:0000250"/>
    <property type="project" value="UniProtKB"/>
</dbReference>
<dbReference type="GO" id="GO:0005874">
    <property type="term" value="C:microtubule"/>
    <property type="evidence" value="ECO:0000250"/>
    <property type="project" value="UniProtKB"/>
</dbReference>
<dbReference type="GO" id="GO:0043005">
    <property type="term" value="C:neuron projection"/>
    <property type="evidence" value="ECO:0000250"/>
    <property type="project" value="UniProtKB"/>
</dbReference>
<dbReference type="GO" id="GO:0005634">
    <property type="term" value="C:nucleus"/>
    <property type="evidence" value="ECO:0000250"/>
    <property type="project" value="UniProtKB"/>
</dbReference>
<dbReference type="GO" id="GO:0005886">
    <property type="term" value="C:plasma membrane"/>
    <property type="evidence" value="ECO:0000250"/>
    <property type="project" value="UniProtKB"/>
</dbReference>
<dbReference type="GO" id="GO:0042383">
    <property type="term" value="C:sarcolemma"/>
    <property type="evidence" value="ECO:0007669"/>
    <property type="project" value="UniProtKB-SubCell"/>
</dbReference>
<dbReference type="GO" id="GO:0048487">
    <property type="term" value="F:beta-tubulin binding"/>
    <property type="evidence" value="ECO:0000250"/>
    <property type="project" value="UniProtKB"/>
</dbReference>
<dbReference type="GO" id="GO:0008083">
    <property type="term" value="F:growth factor activity"/>
    <property type="evidence" value="ECO:0007669"/>
    <property type="project" value="InterPro"/>
</dbReference>
<dbReference type="GO" id="GO:0008017">
    <property type="term" value="F:microtubule binding"/>
    <property type="evidence" value="ECO:0000250"/>
    <property type="project" value="UniProtKB"/>
</dbReference>
<dbReference type="GO" id="GO:0017080">
    <property type="term" value="F:sodium channel regulator activity"/>
    <property type="evidence" value="ECO:0000250"/>
    <property type="project" value="UniProtKB"/>
</dbReference>
<dbReference type="GO" id="GO:0044325">
    <property type="term" value="F:transmembrane transporter binding"/>
    <property type="evidence" value="ECO:0000250"/>
    <property type="project" value="UniProtKB"/>
</dbReference>
<dbReference type="GO" id="GO:0045200">
    <property type="term" value="P:establishment of neuroblast polarity"/>
    <property type="evidence" value="ECO:0000250"/>
    <property type="project" value="UniProtKB"/>
</dbReference>
<dbReference type="GO" id="GO:0060322">
    <property type="term" value="P:head development"/>
    <property type="evidence" value="ECO:0000315"/>
    <property type="project" value="UniProtKB"/>
</dbReference>
<dbReference type="GO" id="GO:1904862">
    <property type="term" value="P:inhibitory synapse assembly"/>
    <property type="evidence" value="ECO:0000250"/>
    <property type="project" value="UniProtKB"/>
</dbReference>
<dbReference type="GO" id="GO:0046785">
    <property type="term" value="P:microtubule polymerization"/>
    <property type="evidence" value="ECO:0000250"/>
    <property type="project" value="UniProtKB"/>
</dbReference>
<dbReference type="GO" id="GO:0048671">
    <property type="term" value="P:negative regulation of collateral sprouting"/>
    <property type="evidence" value="ECO:0000250"/>
    <property type="project" value="UniProtKB"/>
</dbReference>
<dbReference type="GO" id="GO:0007026">
    <property type="term" value="P:negative regulation of microtubule depolymerization"/>
    <property type="evidence" value="ECO:0000250"/>
    <property type="project" value="UniProtKB"/>
</dbReference>
<dbReference type="GO" id="GO:0022008">
    <property type="term" value="P:neurogenesis"/>
    <property type="evidence" value="ECO:0000318"/>
    <property type="project" value="GO_Central"/>
</dbReference>
<dbReference type="GO" id="GO:0030182">
    <property type="term" value="P:neuron differentiation"/>
    <property type="evidence" value="ECO:0000315"/>
    <property type="project" value="UniProtKB"/>
</dbReference>
<dbReference type="GO" id="GO:0001764">
    <property type="term" value="P:neuron migration"/>
    <property type="evidence" value="ECO:0000250"/>
    <property type="project" value="UniProtKB"/>
</dbReference>
<dbReference type="GO" id="GO:1905152">
    <property type="term" value="P:positive regulation of voltage-gated sodium channel activity"/>
    <property type="evidence" value="ECO:0000250"/>
    <property type="project" value="UniProtKB"/>
</dbReference>
<dbReference type="GO" id="GO:0072659">
    <property type="term" value="P:protein localization to plasma membrane"/>
    <property type="evidence" value="ECO:0000250"/>
    <property type="project" value="UniProtKB"/>
</dbReference>
<dbReference type="GO" id="GO:0070376">
    <property type="term" value="P:regulation of ERK5 cascade"/>
    <property type="evidence" value="ECO:0000315"/>
    <property type="project" value="UniProtKB"/>
</dbReference>
<dbReference type="CDD" id="cd23329">
    <property type="entry name" value="beta-trefoil_FGF13"/>
    <property type="match status" value="1"/>
</dbReference>
<dbReference type="FunFam" id="2.80.10.50:FF:000001">
    <property type="entry name" value="Fibroblast growth factor"/>
    <property type="match status" value="1"/>
</dbReference>
<dbReference type="Gene3D" id="2.80.10.50">
    <property type="match status" value="1"/>
</dbReference>
<dbReference type="InterPro" id="IPR002209">
    <property type="entry name" value="Fibroblast_GF_fam"/>
</dbReference>
<dbReference type="InterPro" id="IPR008996">
    <property type="entry name" value="IL1/FGF"/>
</dbReference>
<dbReference type="PANTHER" id="PTHR11486">
    <property type="entry name" value="FIBROBLAST GROWTH FACTOR"/>
    <property type="match status" value="1"/>
</dbReference>
<dbReference type="Pfam" id="PF00167">
    <property type="entry name" value="FGF"/>
    <property type="match status" value="1"/>
</dbReference>
<dbReference type="PRINTS" id="PR00263">
    <property type="entry name" value="HBGFFGF"/>
</dbReference>
<dbReference type="PRINTS" id="PR00262">
    <property type="entry name" value="IL1HBGF"/>
</dbReference>
<dbReference type="SMART" id="SM00442">
    <property type="entry name" value="FGF"/>
    <property type="match status" value="1"/>
</dbReference>
<dbReference type="SUPFAM" id="SSF50353">
    <property type="entry name" value="Cytokine"/>
    <property type="match status" value="1"/>
</dbReference>
<dbReference type="PROSITE" id="PS00247">
    <property type="entry name" value="HBGF_FGF"/>
    <property type="match status" value="1"/>
</dbReference>
<accession>A6P7H6</accession>
<accession>A6P7H5</accession>
<accession>Q6DFL4</accession>
<sequence length="245" mass="27519">MAAAIASSLIRQKRQAREREKSNACKCVSSPSKSKGNCEKNKLNVFSRVKLFGSKKRRRRRPEPQLKGIVTKLYSRQGYHLQLQPDGTIDGAKEEESSATVFNLIPVGLRVVAIQGVQTKLYLAMNSEGYLYTSEHFTPECKFKESVFENYYVTYSSMIYRQQHSGRSWFLGLNKEGEIMKGNHVKKNKPAAHFLPKPLKVAMYKEPSLHDLTEFSRSGSGTPTKSRSVSGVLNGGKSMSQNDST</sequence>
<feature type="chain" id="PRO_0000419209" description="Fibroblast growth factor 13">
    <location>
        <begin position="1"/>
        <end position="245"/>
    </location>
</feature>
<feature type="region of interest" description="Mediates targeting to the nucleus" evidence="1">
    <location>
        <begin position="1"/>
        <end position="62"/>
    </location>
</feature>
<feature type="region of interest" description="Disordered" evidence="3">
    <location>
        <begin position="1"/>
        <end position="37"/>
    </location>
</feature>
<feature type="region of interest" description="Disordered" evidence="3">
    <location>
        <begin position="213"/>
        <end position="245"/>
    </location>
</feature>
<feature type="compositionally biased region" description="Polar residues" evidence="3">
    <location>
        <begin position="215"/>
        <end position="245"/>
    </location>
</feature>
<feature type="splice variant" id="VSP_044134" description="In isoform 2." evidence="5">
    <original>MAAAIASSLIRQKRQAREREKSNACKCVSSPSKSKGNCEKNKLNVFSRVKLFGSKKRRRRRP</original>
    <variation>MSGKVIKPKEEKDASK</variation>
    <location>
        <begin position="1"/>
        <end position="62"/>
    </location>
</feature>
<feature type="splice variant" id="VSP_044135" description="In isoform 3." evidence="6">
    <original>MAAAIASSLIRQKRQAREREKSNACKCVSSPSKSKGNCEKNKLNVFSRVKLFGSKKRRRRRP</original>
    <variation>MSGKVIKPKEEKDASKVLDDAPPGTQEYIMLRQDSIQSADLKKKESPFRAKCHEIFCCPLKQVHLKEHTEPE</variation>
    <location>
        <begin position="1"/>
        <end position="62"/>
    </location>
</feature>
<name>FGF13_XENLA</name>
<comment type="function">
    <text evidence="2 4">Microtubule-binding protein which directly binds tubulin and is involved in both polymerization and stabilization of microtubules (By similarity). Through its action on microtubules, may participate in the refinement of axons by negatively regulating axonal and leading processes branching (By similarity). Plays a crucial role in neuron polarization and migration (By similarity). Regulates voltage-gated sodium channel transport and function (By similarity). Required for proper head development, it is involved in neural differentiation through regulation of the mek5-erk5 pathway (PubMed:17584734).</text>
</comment>
<comment type="subcellular location">
    <subcellularLocation>
        <location evidence="2">Cell projection</location>
        <location evidence="2">Filopodium</location>
    </subcellularLocation>
    <subcellularLocation>
        <location evidence="2">Cell projection</location>
        <location evidence="2">Growth cone</location>
    </subcellularLocation>
    <subcellularLocation>
        <location evidence="2">Cell projection</location>
        <location evidence="2">Dendrite</location>
    </subcellularLocation>
    <subcellularLocation>
        <location evidence="2">Cell membrane</location>
        <location evidence="2">Sarcolemma</location>
    </subcellularLocation>
    <subcellularLocation>
        <location evidence="2">Cytoplasm</location>
    </subcellularLocation>
    <text evidence="2">Not secreted. Localizes to the lateral membrane and intercalated disks of myocytes.</text>
</comment>
<comment type="alternative products">
    <event type="alternative splicing"/>
    <isoform>
        <id>A6P7H6-1</id>
        <name>1</name>
        <name>xFGF13-S</name>
        <sequence type="displayed"/>
    </isoform>
    <isoform>
        <id>A6P7H6-2</id>
        <name>2</name>
        <name>xFGF13-V</name>
        <sequence type="described" ref="VSP_044134"/>
    </isoform>
    <isoform>
        <id>A6P7H6-3</id>
        <name>3</name>
        <name>xFGF13-VY</name>
        <sequence type="described" ref="VSP_044135"/>
    </isoform>
</comment>
<comment type="developmental stage">
    <text evidence="4">Expressed maternally. Zygotic expression is observed at neurula and tailbud stages. Widely expressed in the presumptive ectoderm during blastula, and in the dorsal structures during neurula and tailbud stages. At tailbud stages, strongly expressed in the ventral region of neural tube. Isoform 1 is expressed weakly at neurula and strongly at tailbud stage. Isoform 2 and isoform 3 are strongly expressed at the tailbud stage.</text>
</comment>
<comment type="similarity">
    <text evidence="7">Belongs to the heparin-binding growth factors family.</text>
</comment>
<reference key="1">
    <citation type="journal article" date="2007" name="J. Biol. Chem.">
        <title>Fibroblast growth factor 13 is essential for neural differentiation in Xenopus early embryonic development.</title>
        <authorList>
            <person name="Nishimoto S."/>
            <person name="Nishida E."/>
        </authorList>
    </citation>
    <scope>NUCLEOTIDE SEQUENCE [MRNA] (ISOFORMS 1 AND 2)</scope>
    <scope>DEVELOPMENTAL STAGE</scope>
    <scope>FUNCTION</scope>
</reference>
<reference key="2">
    <citation type="submission" date="2004-07" db="EMBL/GenBank/DDBJ databases">
        <authorList>
            <consortium name="NIH - Xenopus Gene Collection (XGC) project"/>
        </authorList>
    </citation>
    <scope>NUCLEOTIDE SEQUENCE [LARGE SCALE MRNA] (ISOFORM 3)</scope>
    <source>
        <tissue>Ovary</tissue>
    </source>
</reference>
<proteinExistence type="evidence at transcript level"/>